<gene>
    <name type="primary">yrhD</name>
    <name type="ordered locus">BSU27230</name>
</gene>
<evidence type="ECO:0000305" key="1"/>
<sequence length="160" mass="17514">MATPITTIKKETKTAEQIKLEKIEELKELLAENEDAVSKTMTLMNELNDLGIFDAATSMLRAKEDIAKIALGQVSREPVTNLINTMMAAGGALTKADPEFTAKLLESVMAGTEQAQSFLKEDKKVGILDLLKAMNDPDINRAVGFGLQFLKGMGKELREQ</sequence>
<organism>
    <name type="scientific">Bacillus subtilis (strain 168)</name>
    <dbReference type="NCBI Taxonomy" id="224308"/>
    <lineage>
        <taxon>Bacteria</taxon>
        <taxon>Bacillati</taxon>
        <taxon>Bacillota</taxon>
        <taxon>Bacilli</taxon>
        <taxon>Bacillales</taxon>
        <taxon>Bacillaceae</taxon>
        <taxon>Bacillus</taxon>
    </lineage>
</organism>
<keyword id="KW-1185">Reference proteome</keyword>
<dbReference type="EMBL" id="U93874">
    <property type="protein sequence ID" value="AAB80861.1"/>
    <property type="molecule type" value="Genomic_DNA"/>
</dbReference>
<dbReference type="EMBL" id="AL009126">
    <property type="protein sequence ID" value="CAB14665.1"/>
    <property type="molecule type" value="Genomic_DNA"/>
</dbReference>
<dbReference type="PIR" id="C69974">
    <property type="entry name" value="C69974"/>
</dbReference>
<dbReference type="RefSeq" id="NP_390601.1">
    <property type="nucleotide sequence ID" value="NC_000964.3"/>
</dbReference>
<dbReference type="RefSeq" id="WP_003246168.1">
    <property type="nucleotide sequence ID" value="NZ_OZ025638.1"/>
</dbReference>
<dbReference type="SMR" id="O05396"/>
<dbReference type="FunCoup" id="O05396">
    <property type="interactions" value="4"/>
</dbReference>
<dbReference type="STRING" id="224308.BSU27230"/>
<dbReference type="PaxDb" id="224308-BSU27230"/>
<dbReference type="EnsemblBacteria" id="CAB14665">
    <property type="protein sequence ID" value="CAB14665"/>
    <property type="gene ID" value="BSU_27230"/>
</dbReference>
<dbReference type="GeneID" id="937583"/>
<dbReference type="KEGG" id="bsu:BSU27230"/>
<dbReference type="PATRIC" id="fig|224308.179.peg.2959"/>
<dbReference type="eggNOG" id="COG2427">
    <property type="taxonomic scope" value="Bacteria"/>
</dbReference>
<dbReference type="InParanoid" id="O05396"/>
<dbReference type="OrthoDB" id="147801at2"/>
<dbReference type="PhylomeDB" id="O05396"/>
<dbReference type="BioCyc" id="BSUB:BSU27230-MONOMER"/>
<dbReference type="Proteomes" id="UP000001570">
    <property type="component" value="Chromosome"/>
</dbReference>
<dbReference type="InterPro" id="IPR012440">
    <property type="entry name" value="DUF1641"/>
</dbReference>
<dbReference type="PANTHER" id="PTHR38433">
    <property type="match status" value="1"/>
</dbReference>
<dbReference type="PANTHER" id="PTHR38433:SF1">
    <property type="entry name" value="DUF1641 DOMAIN-CONTAINING PROTEIN"/>
    <property type="match status" value="1"/>
</dbReference>
<dbReference type="Pfam" id="PF07849">
    <property type="entry name" value="DUF1641"/>
    <property type="match status" value="1"/>
</dbReference>
<comment type="similarity">
    <text evidence="1">To A.fulgidus AF1717.</text>
</comment>
<protein>
    <recommendedName>
        <fullName>Uncharacterized protein YrhD</fullName>
    </recommendedName>
</protein>
<feature type="chain" id="PRO_0000049865" description="Uncharacterized protein YrhD">
    <location>
        <begin position="1"/>
        <end position="160"/>
    </location>
</feature>
<name>YRHD_BACSU</name>
<proteinExistence type="predicted"/>
<reference key="1">
    <citation type="journal article" date="1997" name="Microbiology">
        <title>Sequence of the Bacillus subtilis genome region in the vicinity of the lev operon reveals two new extracytoplasmic function RNA polymerase sigma factors SigV and SigZ.</title>
        <authorList>
            <person name="Sorokin A."/>
            <person name="Bolotin A."/>
            <person name="Purnelle B."/>
            <person name="Hilbert H."/>
            <person name="Lauber J."/>
            <person name="Duesterhoeft A."/>
            <person name="Ehrlich S.D."/>
        </authorList>
    </citation>
    <scope>NUCLEOTIDE SEQUENCE [GENOMIC DNA]</scope>
    <source>
        <strain>168</strain>
    </source>
</reference>
<reference key="2">
    <citation type="journal article" date="1997" name="Nature">
        <title>The complete genome sequence of the Gram-positive bacterium Bacillus subtilis.</title>
        <authorList>
            <person name="Kunst F."/>
            <person name="Ogasawara N."/>
            <person name="Moszer I."/>
            <person name="Albertini A.M."/>
            <person name="Alloni G."/>
            <person name="Azevedo V."/>
            <person name="Bertero M.G."/>
            <person name="Bessieres P."/>
            <person name="Bolotin A."/>
            <person name="Borchert S."/>
            <person name="Borriss R."/>
            <person name="Boursier L."/>
            <person name="Brans A."/>
            <person name="Braun M."/>
            <person name="Brignell S.C."/>
            <person name="Bron S."/>
            <person name="Brouillet S."/>
            <person name="Bruschi C.V."/>
            <person name="Caldwell B."/>
            <person name="Capuano V."/>
            <person name="Carter N.M."/>
            <person name="Choi S.-K."/>
            <person name="Codani J.-J."/>
            <person name="Connerton I.F."/>
            <person name="Cummings N.J."/>
            <person name="Daniel R.A."/>
            <person name="Denizot F."/>
            <person name="Devine K.M."/>
            <person name="Duesterhoeft A."/>
            <person name="Ehrlich S.D."/>
            <person name="Emmerson P.T."/>
            <person name="Entian K.-D."/>
            <person name="Errington J."/>
            <person name="Fabret C."/>
            <person name="Ferrari E."/>
            <person name="Foulger D."/>
            <person name="Fritz C."/>
            <person name="Fujita M."/>
            <person name="Fujita Y."/>
            <person name="Fuma S."/>
            <person name="Galizzi A."/>
            <person name="Galleron N."/>
            <person name="Ghim S.-Y."/>
            <person name="Glaser P."/>
            <person name="Goffeau A."/>
            <person name="Golightly E.J."/>
            <person name="Grandi G."/>
            <person name="Guiseppi G."/>
            <person name="Guy B.J."/>
            <person name="Haga K."/>
            <person name="Haiech J."/>
            <person name="Harwood C.R."/>
            <person name="Henaut A."/>
            <person name="Hilbert H."/>
            <person name="Holsappel S."/>
            <person name="Hosono S."/>
            <person name="Hullo M.-F."/>
            <person name="Itaya M."/>
            <person name="Jones L.-M."/>
            <person name="Joris B."/>
            <person name="Karamata D."/>
            <person name="Kasahara Y."/>
            <person name="Klaerr-Blanchard M."/>
            <person name="Klein C."/>
            <person name="Kobayashi Y."/>
            <person name="Koetter P."/>
            <person name="Koningstein G."/>
            <person name="Krogh S."/>
            <person name="Kumano M."/>
            <person name="Kurita K."/>
            <person name="Lapidus A."/>
            <person name="Lardinois S."/>
            <person name="Lauber J."/>
            <person name="Lazarevic V."/>
            <person name="Lee S.-M."/>
            <person name="Levine A."/>
            <person name="Liu H."/>
            <person name="Masuda S."/>
            <person name="Mauel C."/>
            <person name="Medigue C."/>
            <person name="Medina N."/>
            <person name="Mellado R.P."/>
            <person name="Mizuno M."/>
            <person name="Moestl D."/>
            <person name="Nakai S."/>
            <person name="Noback M."/>
            <person name="Noone D."/>
            <person name="O'Reilly M."/>
            <person name="Ogawa K."/>
            <person name="Ogiwara A."/>
            <person name="Oudega B."/>
            <person name="Park S.-H."/>
            <person name="Parro V."/>
            <person name="Pohl T.M."/>
            <person name="Portetelle D."/>
            <person name="Porwollik S."/>
            <person name="Prescott A.M."/>
            <person name="Presecan E."/>
            <person name="Pujic P."/>
            <person name="Purnelle B."/>
            <person name="Rapoport G."/>
            <person name="Rey M."/>
            <person name="Reynolds S."/>
            <person name="Rieger M."/>
            <person name="Rivolta C."/>
            <person name="Rocha E."/>
            <person name="Roche B."/>
            <person name="Rose M."/>
            <person name="Sadaie Y."/>
            <person name="Sato T."/>
            <person name="Scanlan E."/>
            <person name="Schleich S."/>
            <person name="Schroeter R."/>
            <person name="Scoffone F."/>
            <person name="Sekiguchi J."/>
            <person name="Sekowska A."/>
            <person name="Seror S.J."/>
            <person name="Serror P."/>
            <person name="Shin B.-S."/>
            <person name="Soldo B."/>
            <person name="Sorokin A."/>
            <person name="Tacconi E."/>
            <person name="Takagi T."/>
            <person name="Takahashi H."/>
            <person name="Takemaru K."/>
            <person name="Takeuchi M."/>
            <person name="Tamakoshi A."/>
            <person name="Tanaka T."/>
            <person name="Terpstra P."/>
            <person name="Tognoni A."/>
            <person name="Tosato V."/>
            <person name="Uchiyama S."/>
            <person name="Vandenbol M."/>
            <person name="Vannier F."/>
            <person name="Vassarotti A."/>
            <person name="Viari A."/>
            <person name="Wambutt R."/>
            <person name="Wedler E."/>
            <person name="Wedler H."/>
            <person name="Weitzenegger T."/>
            <person name="Winters P."/>
            <person name="Wipat A."/>
            <person name="Yamamoto H."/>
            <person name="Yamane K."/>
            <person name="Yasumoto K."/>
            <person name="Yata K."/>
            <person name="Yoshida K."/>
            <person name="Yoshikawa H.-F."/>
            <person name="Zumstein E."/>
            <person name="Yoshikawa H."/>
            <person name="Danchin A."/>
        </authorList>
    </citation>
    <scope>NUCLEOTIDE SEQUENCE [LARGE SCALE GENOMIC DNA]</scope>
    <source>
        <strain>168</strain>
    </source>
</reference>
<accession>O05396</accession>